<sequence length="274" mass="30223">MQFSKMHGLGNDFMVVDAVTQNVFFSPDLIRRLADRHLGVGFDQLLVVEPPYDPELDFHYRIFNADGSEVAQCGNGARCFARFVRLKGLTNKRDIRVSTANGRMVLTVTDDDLVRVNMGEPNFEPSAVPFRANKVEKTYIMRAAEQTILCGVVSMGNPHCVIQVDDVDTAAVETLGPVLESHERFPERANIGFMQVVKREHIRLRVYERGAGETQACGSGACAAVAVGIQQGLLAEEVRVELPGGRLDIAWKGPGHPLYMTGPAVHVYDGFIHL</sequence>
<comment type="function">
    <text evidence="1">Catalyzes the stereoinversion of LL-2,6-diaminopimelate (L,L-DAP) to meso-diaminopimelate (meso-DAP), a precursor of L-lysine and an essential component of the bacterial peptidoglycan.</text>
</comment>
<comment type="catalytic activity">
    <reaction evidence="1">
        <text>(2S,6S)-2,6-diaminopimelate = meso-2,6-diaminopimelate</text>
        <dbReference type="Rhea" id="RHEA:15393"/>
        <dbReference type="ChEBI" id="CHEBI:57609"/>
        <dbReference type="ChEBI" id="CHEBI:57791"/>
        <dbReference type="EC" id="5.1.1.7"/>
    </reaction>
</comment>
<comment type="pathway">
    <text evidence="1">Amino-acid biosynthesis; L-lysine biosynthesis via DAP pathway; DL-2,6-diaminopimelate from LL-2,6-diaminopimelate: step 1/1.</text>
</comment>
<comment type="subunit">
    <text evidence="1">Homodimer.</text>
</comment>
<comment type="subcellular location">
    <subcellularLocation>
        <location evidence="1">Cytoplasm</location>
    </subcellularLocation>
</comment>
<comment type="similarity">
    <text evidence="1">Belongs to the diaminopimelate epimerase family.</text>
</comment>
<name>DAPF_ECOL6</name>
<reference key="1">
    <citation type="journal article" date="2002" name="Proc. Natl. Acad. Sci. U.S.A.">
        <title>Extensive mosaic structure revealed by the complete genome sequence of uropathogenic Escherichia coli.</title>
        <authorList>
            <person name="Welch R.A."/>
            <person name="Burland V."/>
            <person name="Plunkett G. III"/>
            <person name="Redford P."/>
            <person name="Roesch P."/>
            <person name="Rasko D."/>
            <person name="Buckles E.L."/>
            <person name="Liou S.-R."/>
            <person name="Boutin A."/>
            <person name="Hackett J."/>
            <person name="Stroud D."/>
            <person name="Mayhew G.F."/>
            <person name="Rose D.J."/>
            <person name="Zhou S."/>
            <person name="Schwartz D.C."/>
            <person name="Perna N.T."/>
            <person name="Mobley H.L.T."/>
            <person name="Donnenberg M.S."/>
            <person name="Blattner F.R."/>
        </authorList>
    </citation>
    <scope>NUCLEOTIDE SEQUENCE [LARGE SCALE GENOMIC DNA]</scope>
    <source>
        <strain>CFT073 / ATCC 700928 / UPEC</strain>
    </source>
</reference>
<accession>Q8FBN6</accession>
<organism>
    <name type="scientific">Escherichia coli O6:H1 (strain CFT073 / ATCC 700928 / UPEC)</name>
    <dbReference type="NCBI Taxonomy" id="199310"/>
    <lineage>
        <taxon>Bacteria</taxon>
        <taxon>Pseudomonadati</taxon>
        <taxon>Pseudomonadota</taxon>
        <taxon>Gammaproteobacteria</taxon>
        <taxon>Enterobacterales</taxon>
        <taxon>Enterobacteriaceae</taxon>
        <taxon>Escherichia</taxon>
    </lineage>
</organism>
<keyword id="KW-0028">Amino-acid biosynthesis</keyword>
<keyword id="KW-0963">Cytoplasm</keyword>
<keyword id="KW-0413">Isomerase</keyword>
<keyword id="KW-0457">Lysine biosynthesis</keyword>
<keyword id="KW-1185">Reference proteome</keyword>
<feature type="chain" id="PRO_0000149840" description="Diaminopimelate epimerase">
    <location>
        <begin position="1"/>
        <end position="274"/>
    </location>
</feature>
<feature type="active site" description="Proton donor" evidence="1">
    <location>
        <position position="73"/>
    </location>
</feature>
<feature type="active site" description="Proton acceptor" evidence="1">
    <location>
        <position position="217"/>
    </location>
</feature>
<feature type="binding site" evidence="1">
    <location>
        <position position="11"/>
    </location>
    <ligand>
        <name>substrate</name>
    </ligand>
</feature>
<feature type="binding site" evidence="1">
    <location>
        <position position="44"/>
    </location>
    <ligand>
        <name>substrate</name>
    </ligand>
</feature>
<feature type="binding site" evidence="1">
    <location>
        <position position="64"/>
    </location>
    <ligand>
        <name>substrate</name>
    </ligand>
</feature>
<feature type="binding site" evidence="1">
    <location>
        <begin position="74"/>
        <end position="75"/>
    </location>
    <ligand>
        <name>substrate</name>
    </ligand>
</feature>
<feature type="binding site" evidence="1">
    <location>
        <position position="157"/>
    </location>
    <ligand>
        <name>substrate</name>
    </ligand>
</feature>
<feature type="binding site" evidence="1">
    <location>
        <position position="190"/>
    </location>
    <ligand>
        <name>substrate</name>
    </ligand>
</feature>
<feature type="binding site" evidence="1">
    <location>
        <begin position="208"/>
        <end position="209"/>
    </location>
    <ligand>
        <name>substrate</name>
    </ligand>
</feature>
<feature type="binding site" evidence="1">
    <location>
        <begin position="218"/>
        <end position="219"/>
    </location>
    <ligand>
        <name>substrate</name>
    </ligand>
</feature>
<feature type="site" description="Could be important to modulate the pK values of the two catalytic cysteine residues" evidence="1">
    <location>
        <position position="159"/>
    </location>
</feature>
<feature type="site" description="Could be important to modulate the pK values of the two catalytic cysteine residues" evidence="1">
    <location>
        <position position="208"/>
    </location>
</feature>
<feature type="site" description="Important for dimerization" evidence="1">
    <location>
        <position position="268"/>
    </location>
</feature>
<protein>
    <recommendedName>
        <fullName evidence="1">Diaminopimelate epimerase</fullName>
        <shortName evidence="1">DAP epimerase</shortName>
        <ecNumber evidence="1">5.1.1.7</ecNumber>
    </recommendedName>
    <alternativeName>
        <fullName evidence="1">PLP-independent amino acid racemase</fullName>
    </alternativeName>
</protein>
<evidence type="ECO:0000255" key="1">
    <source>
        <dbReference type="HAMAP-Rule" id="MF_00197"/>
    </source>
</evidence>
<dbReference type="EC" id="5.1.1.7" evidence="1"/>
<dbReference type="EMBL" id="AE014075">
    <property type="protein sequence ID" value="AAN83163.1"/>
    <property type="molecule type" value="Genomic_DNA"/>
</dbReference>
<dbReference type="RefSeq" id="WP_001160646.1">
    <property type="nucleotide sequence ID" value="NZ_CP051263.1"/>
</dbReference>
<dbReference type="SMR" id="Q8FBN6"/>
<dbReference type="STRING" id="199310.c4730"/>
<dbReference type="KEGG" id="ecc:c4730"/>
<dbReference type="eggNOG" id="COG0253">
    <property type="taxonomic scope" value="Bacteria"/>
</dbReference>
<dbReference type="HOGENOM" id="CLU_053306_1_1_6"/>
<dbReference type="UniPathway" id="UPA00034">
    <property type="reaction ID" value="UER00025"/>
</dbReference>
<dbReference type="Proteomes" id="UP000001410">
    <property type="component" value="Chromosome"/>
</dbReference>
<dbReference type="GO" id="GO:0005829">
    <property type="term" value="C:cytosol"/>
    <property type="evidence" value="ECO:0007669"/>
    <property type="project" value="TreeGrafter"/>
</dbReference>
<dbReference type="GO" id="GO:0008837">
    <property type="term" value="F:diaminopimelate epimerase activity"/>
    <property type="evidence" value="ECO:0007669"/>
    <property type="project" value="UniProtKB-UniRule"/>
</dbReference>
<dbReference type="GO" id="GO:0009089">
    <property type="term" value="P:lysine biosynthetic process via diaminopimelate"/>
    <property type="evidence" value="ECO:0007669"/>
    <property type="project" value="UniProtKB-UniRule"/>
</dbReference>
<dbReference type="FunFam" id="3.10.310.10:FF:000001">
    <property type="entry name" value="Diaminopimelate epimerase"/>
    <property type="match status" value="1"/>
</dbReference>
<dbReference type="FunFam" id="3.10.310.10:FF:000002">
    <property type="entry name" value="Diaminopimelate epimerase"/>
    <property type="match status" value="1"/>
</dbReference>
<dbReference type="Gene3D" id="3.10.310.10">
    <property type="entry name" value="Diaminopimelate Epimerase, Chain A, domain 1"/>
    <property type="match status" value="2"/>
</dbReference>
<dbReference type="HAMAP" id="MF_00197">
    <property type="entry name" value="DAP_epimerase"/>
    <property type="match status" value="1"/>
</dbReference>
<dbReference type="InterPro" id="IPR018510">
    <property type="entry name" value="DAP_epimerase_AS"/>
</dbReference>
<dbReference type="InterPro" id="IPR001653">
    <property type="entry name" value="DAP_epimerase_DapF"/>
</dbReference>
<dbReference type="NCBIfam" id="TIGR00652">
    <property type="entry name" value="DapF"/>
    <property type="match status" value="1"/>
</dbReference>
<dbReference type="PANTHER" id="PTHR31689:SF0">
    <property type="entry name" value="DIAMINOPIMELATE EPIMERASE"/>
    <property type="match status" value="1"/>
</dbReference>
<dbReference type="PANTHER" id="PTHR31689">
    <property type="entry name" value="DIAMINOPIMELATE EPIMERASE, CHLOROPLASTIC"/>
    <property type="match status" value="1"/>
</dbReference>
<dbReference type="Pfam" id="PF01678">
    <property type="entry name" value="DAP_epimerase"/>
    <property type="match status" value="2"/>
</dbReference>
<dbReference type="SUPFAM" id="SSF54506">
    <property type="entry name" value="Diaminopimelate epimerase-like"/>
    <property type="match status" value="1"/>
</dbReference>
<dbReference type="PROSITE" id="PS01326">
    <property type="entry name" value="DAP_EPIMERASE"/>
    <property type="match status" value="1"/>
</dbReference>
<gene>
    <name evidence="1" type="primary">dapF</name>
    <name type="ordered locus">c4730</name>
</gene>
<proteinExistence type="inferred from homology"/>